<dbReference type="EC" id="2.1.1.45" evidence="1"/>
<dbReference type="EMBL" id="CR378664">
    <property type="protein sequence ID" value="CAG19004.1"/>
    <property type="molecule type" value="Genomic_DNA"/>
</dbReference>
<dbReference type="RefSeq" id="WP_011217355.1">
    <property type="nucleotide sequence ID" value="NC_006370.1"/>
</dbReference>
<dbReference type="SMR" id="Q6LUM1"/>
<dbReference type="STRING" id="298386.PBPRA0581"/>
<dbReference type="KEGG" id="ppr:PBPRA0581"/>
<dbReference type="eggNOG" id="COG0207">
    <property type="taxonomic scope" value="Bacteria"/>
</dbReference>
<dbReference type="HOGENOM" id="CLU_021669_0_1_6"/>
<dbReference type="UniPathway" id="UPA00575"/>
<dbReference type="Proteomes" id="UP000000593">
    <property type="component" value="Chromosome 1"/>
</dbReference>
<dbReference type="GO" id="GO:0005829">
    <property type="term" value="C:cytosol"/>
    <property type="evidence" value="ECO:0007669"/>
    <property type="project" value="TreeGrafter"/>
</dbReference>
<dbReference type="GO" id="GO:0004799">
    <property type="term" value="F:thymidylate synthase activity"/>
    <property type="evidence" value="ECO:0007669"/>
    <property type="project" value="UniProtKB-UniRule"/>
</dbReference>
<dbReference type="GO" id="GO:0006231">
    <property type="term" value="P:dTMP biosynthetic process"/>
    <property type="evidence" value="ECO:0007669"/>
    <property type="project" value="UniProtKB-UniRule"/>
</dbReference>
<dbReference type="GO" id="GO:0006235">
    <property type="term" value="P:dTTP biosynthetic process"/>
    <property type="evidence" value="ECO:0007669"/>
    <property type="project" value="UniProtKB-UniRule"/>
</dbReference>
<dbReference type="GO" id="GO:0032259">
    <property type="term" value="P:methylation"/>
    <property type="evidence" value="ECO:0007669"/>
    <property type="project" value="UniProtKB-KW"/>
</dbReference>
<dbReference type="CDD" id="cd00351">
    <property type="entry name" value="TS_Pyrimidine_HMase"/>
    <property type="match status" value="1"/>
</dbReference>
<dbReference type="Gene3D" id="3.30.572.10">
    <property type="entry name" value="Thymidylate synthase/dCMP hydroxymethylase domain"/>
    <property type="match status" value="1"/>
</dbReference>
<dbReference type="HAMAP" id="MF_00008">
    <property type="entry name" value="Thymidy_synth_bact"/>
    <property type="match status" value="1"/>
</dbReference>
<dbReference type="InterPro" id="IPR045097">
    <property type="entry name" value="Thymidate_synth/dCMP_Mease"/>
</dbReference>
<dbReference type="InterPro" id="IPR023451">
    <property type="entry name" value="Thymidate_synth/dCMP_Mease_dom"/>
</dbReference>
<dbReference type="InterPro" id="IPR036926">
    <property type="entry name" value="Thymidate_synth/dCMP_Mease_sf"/>
</dbReference>
<dbReference type="InterPro" id="IPR000398">
    <property type="entry name" value="Thymidylate_synthase"/>
</dbReference>
<dbReference type="InterPro" id="IPR020940">
    <property type="entry name" value="Thymidylate_synthase_AS"/>
</dbReference>
<dbReference type="NCBIfam" id="NF002498">
    <property type="entry name" value="PRK01827.1-4"/>
    <property type="match status" value="1"/>
</dbReference>
<dbReference type="NCBIfam" id="TIGR03284">
    <property type="entry name" value="thym_sym"/>
    <property type="match status" value="1"/>
</dbReference>
<dbReference type="PANTHER" id="PTHR11548:SF9">
    <property type="entry name" value="THYMIDYLATE SYNTHASE"/>
    <property type="match status" value="1"/>
</dbReference>
<dbReference type="PANTHER" id="PTHR11548">
    <property type="entry name" value="THYMIDYLATE SYNTHASE 1"/>
    <property type="match status" value="1"/>
</dbReference>
<dbReference type="Pfam" id="PF00303">
    <property type="entry name" value="Thymidylat_synt"/>
    <property type="match status" value="1"/>
</dbReference>
<dbReference type="PRINTS" id="PR00108">
    <property type="entry name" value="THYMDSNTHASE"/>
</dbReference>
<dbReference type="SUPFAM" id="SSF55831">
    <property type="entry name" value="Thymidylate synthase/dCMP hydroxymethylase"/>
    <property type="match status" value="1"/>
</dbReference>
<dbReference type="PROSITE" id="PS00091">
    <property type="entry name" value="THYMIDYLATE_SYNTHASE"/>
    <property type="match status" value="1"/>
</dbReference>
<feature type="chain" id="PRO_0000141001" description="Thymidylate synthase">
    <location>
        <begin position="1"/>
        <end position="283"/>
    </location>
</feature>
<feature type="active site" description="Nucleophile" evidence="1">
    <location>
        <position position="160"/>
    </location>
</feature>
<feature type="binding site" evidence="1">
    <location>
        <position position="22"/>
    </location>
    <ligand>
        <name>dUMP</name>
        <dbReference type="ChEBI" id="CHEBI:246422"/>
    </ligand>
</feature>
<feature type="binding site" evidence="1">
    <location>
        <begin position="180"/>
        <end position="183"/>
    </location>
    <ligand>
        <name>dUMP</name>
        <dbReference type="ChEBI" id="CHEBI:246422"/>
    </ligand>
</feature>
<feature type="binding site" evidence="1">
    <location>
        <position position="183"/>
    </location>
    <ligand>
        <name>(6R)-5,10-methylene-5,6,7,8-tetrahydrofolate</name>
        <dbReference type="ChEBI" id="CHEBI:15636"/>
    </ligand>
</feature>
<feature type="binding site" evidence="1">
    <location>
        <position position="191"/>
    </location>
    <ligand>
        <name>dUMP</name>
        <dbReference type="ChEBI" id="CHEBI:246422"/>
    </ligand>
</feature>
<feature type="binding site" evidence="1">
    <location>
        <begin position="221"/>
        <end position="223"/>
    </location>
    <ligand>
        <name>dUMP</name>
        <dbReference type="ChEBI" id="CHEBI:246422"/>
    </ligand>
</feature>
<feature type="binding site" evidence="1">
    <location>
        <position position="282"/>
    </location>
    <ligand>
        <name>(6R)-5,10-methylene-5,6,7,8-tetrahydrofolate</name>
        <dbReference type="ChEBI" id="CHEBI:15636"/>
    </ligand>
</feature>
<protein>
    <recommendedName>
        <fullName evidence="1">Thymidylate synthase</fullName>
        <shortName evidence="1">TS</shortName>
        <shortName evidence="1">TSase</shortName>
        <ecNumber evidence="1">2.1.1.45</ecNumber>
    </recommendedName>
</protein>
<name>TYSY_PHOPR</name>
<evidence type="ECO:0000255" key="1">
    <source>
        <dbReference type="HAMAP-Rule" id="MF_00008"/>
    </source>
</evidence>
<organism>
    <name type="scientific">Photobacterium profundum (strain SS9)</name>
    <dbReference type="NCBI Taxonomy" id="298386"/>
    <lineage>
        <taxon>Bacteria</taxon>
        <taxon>Pseudomonadati</taxon>
        <taxon>Pseudomonadota</taxon>
        <taxon>Gammaproteobacteria</taxon>
        <taxon>Vibrionales</taxon>
        <taxon>Vibrionaceae</taxon>
        <taxon>Photobacterium</taxon>
    </lineage>
</organism>
<accession>Q6LUM1</accession>
<proteinExistence type="inferred from homology"/>
<gene>
    <name evidence="1" type="primary">thyA</name>
    <name type="ordered locus">PBPRA0581</name>
</gene>
<keyword id="KW-0963">Cytoplasm</keyword>
<keyword id="KW-0489">Methyltransferase</keyword>
<keyword id="KW-0545">Nucleotide biosynthesis</keyword>
<keyword id="KW-1185">Reference proteome</keyword>
<keyword id="KW-0808">Transferase</keyword>
<reference key="1">
    <citation type="journal article" date="2005" name="Science">
        <title>Life at depth: Photobacterium profundum genome sequence and expression analysis.</title>
        <authorList>
            <person name="Vezzi A."/>
            <person name="Campanaro S."/>
            <person name="D'Angelo M."/>
            <person name="Simonato F."/>
            <person name="Vitulo N."/>
            <person name="Lauro F.M."/>
            <person name="Cestaro A."/>
            <person name="Malacrida G."/>
            <person name="Simionati B."/>
            <person name="Cannata N."/>
            <person name="Romualdi C."/>
            <person name="Bartlett D.H."/>
            <person name="Valle G."/>
        </authorList>
    </citation>
    <scope>NUCLEOTIDE SEQUENCE [LARGE SCALE GENOMIC DNA]</scope>
    <source>
        <strain>ATCC BAA-1253 / SS9</strain>
    </source>
</reference>
<comment type="function">
    <text evidence="1">Catalyzes the reductive methylation of 2'-deoxyuridine-5'-monophosphate (dUMP) to 2'-deoxythymidine-5'-monophosphate (dTMP) while utilizing 5,10-methylenetetrahydrofolate (mTHF) as the methyl donor and reductant in the reaction, yielding dihydrofolate (DHF) as a by-product. This enzymatic reaction provides an intracellular de novo source of dTMP, an essential precursor for DNA biosynthesis.</text>
</comment>
<comment type="catalytic activity">
    <reaction evidence="1">
        <text>dUMP + (6R)-5,10-methylene-5,6,7,8-tetrahydrofolate = 7,8-dihydrofolate + dTMP</text>
        <dbReference type="Rhea" id="RHEA:12104"/>
        <dbReference type="ChEBI" id="CHEBI:15636"/>
        <dbReference type="ChEBI" id="CHEBI:57451"/>
        <dbReference type="ChEBI" id="CHEBI:63528"/>
        <dbReference type="ChEBI" id="CHEBI:246422"/>
        <dbReference type="EC" id="2.1.1.45"/>
    </reaction>
</comment>
<comment type="pathway">
    <text evidence="1">Pyrimidine metabolism; dTTP biosynthesis.</text>
</comment>
<comment type="subunit">
    <text evidence="1">Homodimer.</text>
</comment>
<comment type="subcellular location">
    <subcellularLocation>
        <location evidence="1">Cytoplasm</location>
    </subcellularLocation>
</comment>
<comment type="similarity">
    <text evidence="1">Belongs to the thymidylate synthase family. Bacterial-type ThyA subfamily.</text>
</comment>
<sequence length="283" mass="32372">MKQYLELCQRIVDDGVWIENKRTNKRCLTVVNADLTFDVANNQFPLITTRKSFWKSAIAELLGYIRGYDNAADFRALGTKTWDMNANDNLAWLNNPHRKGEDDMGRVYGVQGRSWQKPDGSTIDQLRKIVDNLSEGIDDRGEILTFYNPGEFDLGCLRPCMHTHTFSLLGDTLHLTSYQRSCDVPLGLNFNQVQVYTLLALVAQITGKKPGLAYHKIINAHIYEDQLSLLRDVQLTRTPFAAPKLIINPKIKCLEDLETWVTMDDFDVIGYEHHEAIKYPFSV</sequence>